<organism>
    <name type="scientific">Streptococcus pyogenes serotype M6 (strain ATCC BAA-946 / MGAS10394)</name>
    <dbReference type="NCBI Taxonomy" id="286636"/>
    <lineage>
        <taxon>Bacteria</taxon>
        <taxon>Bacillati</taxon>
        <taxon>Bacillota</taxon>
        <taxon>Bacilli</taxon>
        <taxon>Lactobacillales</taxon>
        <taxon>Streptococcaceae</taxon>
        <taxon>Streptococcus</taxon>
    </lineage>
</organism>
<reference key="1">
    <citation type="journal article" date="2004" name="J. Infect. Dis.">
        <title>Progress toward characterization of the group A Streptococcus metagenome: complete genome sequence of a macrolide-resistant serotype M6 strain.</title>
        <authorList>
            <person name="Banks D.J."/>
            <person name="Porcella S.F."/>
            <person name="Barbian K.D."/>
            <person name="Beres S.B."/>
            <person name="Philips L.E."/>
            <person name="Voyich J.M."/>
            <person name="DeLeo F.R."/>
            <person name="Martin J.M."/>
            <person name="Somerville G.A."/>
            <person name="Musser J.M."/>
        </authorList>
    </citation>
    <scope>NUCLEOTIDE SEQUENCE [LARGE SCALE GENOMIC DNA]</scope>
    <source>
        <strain>ATCC BAA-946 / MGAS10394</strain>
    </source>
</reference>
<name>SPRTL_STRP6</name>
<proteinExistence type="inferred from homology"/>
<accession>Q5XD73</accession>
<feature type="chain" id="PRO_0000213312" description="Protein SprT-like">
    <location>
        <begin position="1"/>
        <end position="145"/>
    </location>
</feature>
<feature type="domain" description="SprT-like" evidence="1">
    <location>
        <begin position="4"/>
        <end position="140"/>
    </location>
</feature>
<feature type="active site" evidence="1">
    <location>
        <position position="65"/>
    </location>
</feature>
<feature type="binding site" evidence="1">
    <location>
        <position position="64"/>
    </location>
    <ligand>
        <name>Zn(2+)</name>
        <dbReference type="ChEBI" id="CHEBI:29105"/>
    </ligand>
</feature>
<feature type="binding site" evidence="1">
    <location>
        <position position="68"/>
    </location>
    <ligand>
        <name>Zn(2+)</name>
        <dbReference type="ChEBI" id="CHEBI:29105"/>
    </ligand>
</feature>
<protein>
    <recommendedName>
        <fullName evidence="1">Protein SprT-like</fullName>
    </recommendedName>
</protein>
<evidence type="ECO:0000255" key="1">
    <source>
        <dbReference type="HAMAP-Rule" id="MF_00745"/>
    </source>
</evidence>
<dbReference type="EMBL" id="CP000003">
    <property type="protein sequence ID" value="AAT86640.1"/>
    <property type="molecule type" value="Genomic_DNA"/>
</dbReference>
<dbReference type="RefSeq" id="WP_011184315.1">
    <property type="nucleotide sequence ID" value="NC_006086.1"/>
</dbReference>
<dbReference type="KEGG" id="spa:M6_Spy0505"/>
<dbReference type="HOGENOM" id="CLU_123820_0_0_9"/>
<dbReference type="Proteomes" id="UP000001167">
    <property type="component" value="Chromosome"/>
</dbReference>
<dbReference type="GO" id="GO:0005737">
    <property type="term" value="C:cytoplasm"/>
    <property type="evidence" value="ECO:0007669"/>
    <property type="project" value="UniProtKB-SubCell"/>
</dbReference>
<dbReference type="GO" id="GO:0008270">
    <property type="term" value="F:zinc ion binding"/>
    <property type="evidence" value="ECO:0007669"/>
    <property type="project" value="UniProtKB-UniRule"/>
</dbReference>
<dbReference type="GO" id="GO:0006950">
    <property type="term" value="P:response to stress"/>
    <property type="evidence" value="ECO:0007669"/>
    <property type="project" value="UniProtKB-ARBA"/>
</dbReference>
<dbReference type="HAMAP" id="MF_00745">
    <property type="entry name" value="SprT_like"/>
    <property type="match status" value="1"/>
</dbReference>
<dbReference type="InterPro" id="IPR006640">
    <property type="entry name" value="SprT-like_domain"/>
</dbReference>
<dbReference type="InterPro" id="IPR023524">
    <property type="entry name" value="Uncharacterised_SprT-like"/>
</dbReference>
<dbReference type="NCBIfam" id="NF003339">
    <property type="entry name" value="PRK04351.1"/>
    <property type="match status" value="1"/>
</dbReference>
<dbReference type="Pfam" id="PF10263">
    <property type="entry name" value="SprT-like"/>
    <property type="match status" value="1"/>
</dbReference>
<dbReference type="SMART" id="SM00731">
    <property type="entry name" value="SprT"/>
    <property type="match status" value="1"/>
</dbReference>
<keyword id="KW-0963">Cytoplasm</keyword>
<keyword id="KW-0479">Metal-binding</keyword>
<keyword id="KW-0862">Zinc</keyword>
<sequence>MTLTNYVQEVSLADFGKPFHHKAYWNKRLKTTGGRFFPKDGHLDFNPRMLEENGELIFRKIVRHELCHYHLYFEGRGYHHKDRDFKDLLAQVNGLRYVPTSSKSKTNHHYSCQTCGQVYQRKRRINLAKYVCGNCHGKLIEKNQS</sequence>
<gene>
    <name type="ordered locus">M6_Spy0505</name>
</gene>
<comment type="cofactor">
    <cofactor evidence="1">
        <name>Zn(2+)</name>
        <dbReference type="ChEBI" id="CHEBI:29105"/>
    </cofactor>
    <text evidence="1">Binds 1 zinc ion.</text>
</comment>
<comment type="subcellular location">
    <subcellularLocation>
        <location evidence="1">Cytoplasm</location>
    </subcellularLocation>
</comment>
<comment type="similarity">
    <text evidence="1">Belongs to the SprT family.</text>
</comment>